<feature type="chain" id="PRO_1000116753" description="Elongation factor Ts">
    <location>
        <begin position="1"/>
        <end position="198"/>
    </location>
</feature>
<feature type="region of interest" description="Involved in Mg(2+) ion dislocation from EF-Tu" evidence="1">
    <location>
        <begin position="81"/>
        <end position="84"/>
    </location>
</feature>
<name>EFTS_LEPBA</name>
<sequence>MAVSSEQIKDLRERTGAGMMDCKKALEEKGGDIEKAVTYLREKGLAKAAKRAGRETGEGKVIAYVHGTGKTGVLVELNCETDFVANNEAFEALGKEIALQITAMSPLYVSEESIPKSEIENEMSVQKALLEKEGKKADQIEKILPGKMKKYYEDICLIHQKSIRDNSKTINDLLQEAIAKFGENITVGRFSRFQVGGN</sequence>
<reference key="1">
    <citation type="journal article" date="2008" name="PLoS ONE">
        <title>Genome sequence of the saprophyte Leptospira biflexa provides insights into the evolution of Leptospira and the pathogenesis of leptospirosis.</title>
        <authorList>
            <person name="Picardeau M."/>
            <person name="Bulach D.M."/>
            <person name="Bouchier C."/>
            <person name="Zuerner R.L."/>
            <person name="Zidane N."/>
            <person name="Wilson P.J."/>
            <person name="Creno S."/>
            <person name="Kuczek E.S."/>
            <person name="Bommezzadri S."/>
            <person name="Davis J.C."/>
            <person name="McGrath A."/>
            <person name="Johnson M.J."/>
            <person name="Boursaux-Eude C."/>
            <person name="Seemann T."/>
            <person name="Rouy Z."/>
            <person name="Coppel R.L."/>
            <person name="Rood J.I."/>
            <person name="Lajus A."/>
            <person name="Davies J.K."/>
            <person name="Medigue C."/>
            <person name="Adler B."/>
        </authorList>
    </citation>
    <scope>NUCLEOTIDE SEQUENCE [LARGE SCALE GENOMIC DNA]</scope>
    <source>
        <strain>Patoc 1 / Ames</strain>
    </source>
</reference>
<keyword id="KW-0963">Cytoplasm</keyword>
<keyword id="KW-0251">Elongation factor</keyword>
<keyword id="KW-0648">Protein biosynthesis</keyword>
<proteinExistence type="inferred from homology"/>
<evidence type="ECO:0000255" key="1">
    <source>
        <dbReference type="HAMAP-Rule" id="MF_00050"/>
    </source>
</evidence>
<comment type="function">
    <text evidence="1">Associates with the EF-Tu.GDP complex and induces the exchange of GDP to GTP. It remains bound to the aminoacyl-tRNA.EF-Tu.GTP complex up to the GTP hydrolysis stage on the ribosome.</text>
</comment>
<comment type="subcellular location">
    <subcellularLocation>
        <location evidence="1">Cytoplasm</location>
    </subcellularLocation>
</comment>
<comment type="similarity">
    <text evidence="1">Belongs to the EF-Ts family.</text>
</comment>
<dbReference type="EMBL" id="CP000777">
    <property type="protein sequence ID" value="ABZ95020.1"/>
    <property type="molecule type" value="Genomic_DNA"/>
</dbReference>
<dbReference type="RefSeq" id="WP_012389555.1">
    <property type="nucleotide sequence ID" value="NC_010842.1"/>
</dbReference>
<dbReference type="SMR" id="B0SDN6"/>
<dbReference type="KEGG" id="lbf:LBF_2536"/>
<dbReference type="HOGENOM" id="CLU_047155_1_1_12"/>
<dbReference type="GO" id="GO:0005737">
    <property type="term" value="C:cytoplasm"/>
    <property type="evidence" value="ECO:0007669"/>
    <property type="project" value="UniProtKB-SubCell"/>
</dbReference>
<dbReference type="GO" id="GO:0003746">
    <property type="term" value="F:translation elongation factor activity"/>
    <property type="evidence" value="ECO:0007669"/>
    <property type="project" value="UniProtKB-UniRule"/>
</dbReference>
<dbReference type="CDD" id="cd14275">
    <property type="entry name" value="UBA_EF-Ts"/>
    <property type="match status" value="1"/>
</dbReference>
<dbReference type="FunFam" id="1.10.8.10:FF:000001">
    <property type="entry name" value="Elongation factor Ts"/>
    <property type="match status" value="1"/>
</dbReference>
<dbReference type="Gene3D" id="1.10.286.20">
    <property type="match status" value="1"/>
</dbReference>
<dbReference type="Gene3D" id="1.10.8.10">
    <property type="entry name" value="DNA helicase RuvA subunit, C-terminal domain"/>
    <property type="match status" value="1"/>
</dbReference>
<dbReference type="Gene3D" id="3.30.479.20">
    <property type="entry name" value="Elongation factor Ts, dimerisation domain"/>
    <property type="match status" value="1"/>
</dbReference>
<dbReference type="HAMAP" id="MF_00050">
    <property type="entry name" value="EF_Ts"/>
    <property type="match status" value="1"/>
</dbReference>
<dbReference type="InterPro" id="IPR036402">
    <property type="entry name" value="EF-Ts_dimer_sf"/>
</dbReference>
<dbReference type="InterPro" id="IPR001816">
    <property type="entry name" value="Transl_elong_EFTs/EF1B"/>
</dbReference>
<dbReference type="InterPro" id="IPR014039">
    <property type="entry name" value="Transl_elong_EFTs/EF1B_dimer"/>
</dbReference>
<dbReference type="InterPro" id="IPR018101">
    <property type="entry name" value="Transl_elong_Ts_CS"/>
</dbReference>
<dbReference type="InterPro" id="IPR009060">
    <property type="entry name" value="UBA-like_sf"/>
</dbReference>
<dbReference type="NCBIfam" id="TIGR00116">
    <property type="entry name" value="tsf"/>
    <property type="match status" value="1"/>
</dbReference>
<dbReference type="PANTHER" id="PTHR11741">
    <property type="entry name" value="ELONGATION FACTOR TS"/>
    <property type="match status" value="1"/>
</dbReference>
<dbReference type="PANTHER" id="PTHR11741:SF0">
    <property type="entry name" value="ELONGATION FACTOR TS, MITOCHONDRIAL"/>
    <property type="match status" value="1"/>
</dbReference>
<dbReference type="Pfam" id="PF00889">
    <property type="entry name" value="EF_TS"/>
    <property type="match status" value="1"/>
</dbReference>
<dbReference type="SUPFAM" id="SSF54713">
    <property type="entry name" value="Elongation factor Ts (EF-Ts), dimerisation domain"/>
    <property type="match status" value="1"/>
</dbReference>
<dbReference type="SUPFAM" id="SSF46934">
    <property type="entry name" value="UBA-like"/>
    <property type="match status" value="1"/>
</dbReference>
<dbReference type="PROSITE" id="PS01126">
    <property type="entry name" value="EF_TS_1"/>
    <property type="match status" value="1"/>
</dbReference>
<dbReference type="PROSITE" id="PS01127">
    <property type="entry name" value="EF_TS_2"/>
    <property type="match status" value="1"/>
</dbReference>
<gene>
    <name evidence="1" type="primary">tsf</name>
    <name type="ordered locus">LBF_2536</name>
</gene>
<organism>
    <name type="scientific">Leptospira biflexa serovar Patoc (strain Patoc 1 / Ames)</name>
    <dbReference type="NCBI Taxonomy" id="355278"/>
    <lineage>
        <taxon>Bacteria</taxon>
        <taxon>Pseudomonadati</taxon>
        <taxon>Spirochaetota</taxon>
        <taxon>Spirochaetia</taxon>
        <taxon>Leptospirales</taxon>
        <taxon>Leptospiraceae</taxon>
        <taxon>Leptospira</taxon>
    </lineage>
</organism>
<accession>B0SDN6</accession>
<protein>
    <recommendedName>
        <fullName evidence="1">Elongation factor Ts</fullName>
        <shortName evidence="1">EF-Ts</shortName>
    </recommendedName>
</protein>